<gene>
    <name evidence="1" type="primary">priB</name>
    <name type="ordered locus">HD_1046</name>
</gene>
<accession>Q7VMD6</accession>
<sequence>MNQRKPANNSLIDNCLTLTGIVTSIVKQSQSPLGIPNYSFWLEHRSNKMEVNLERQVWCKIQVILNGCQFSLITQQIKLGDKVKISGFIHTHKDYNGLSKLVLHTEQIEFIDQEKPNGTLFPSS</sequence>
<name>PRIB_HAEDU</name>
<protein>
    <recommendedName>
        <fullName evidence="1">Replication restart protein PriB</fullName>
    </recommendedName>
</protein>
<reference key="1">
    <citation type="submission" date="2003-06" db="EMBL/GenBank/DDBJ databases">
        <title>The complete genome sequence of Haemophilus ducreyi.</title>
        <authorList>
            <person name="Munson R.S. Jr."/>
            <person name="Ray W.C."/>
            <person name="Mahairas G."/>
            <person name="Sabo P."/>
            <person name="Mungur R."/>
            <person name="Johnson L."/>
            <person name="Nguyen D."/>
            <person name="Wang J."/>
            <person name="Forst C."/>
            <person name="Hood L."/>
        </authorList>
    </citation>
    <scope>NUCLEOTIDE SEQUENCE [LARGE SCALE GENOMIC DNA]</scope>
    <source>
        <strain>35000HP / ATCC 700724</strain>
    </source>
</reference>
<organism>
    <name type="scientific">Haemophilus ducreyi (strain 35000HP / ATCC 700724)</name>
    <dbReference type="NCBI Taxonomy" id="233412"/>
    <lineage>
        <taxon>Bacteria</taxon>
        <taxon>Pseudomonadati</taxon>
        <taxon>Pseudomonadota</taxon>
        <taxon>Gammaproteobacteria</taxon>
        <taxon>Pasteurellales</taxon>
        <taxon>Pasteurellaceae</taxon>
        <taxon>Haemophilus</taxon>
    </lineage>
</organism>
<evidence type="ECO:0000255" key="1">
    <source>
        <dbReference type="HAMAP-Rule" id="MF_00720"/>
    </source>
</evidence>
<comment type="function">
    <text evidence="1">Involved in the restart of stalled replication forks, which reloads the replicative helicase on sites other than the origin of replication; the PriA-PriB pathway is the major replication restart pathway. During primosome assembly it facilitates complex formation between PriA and DnaT on DNA; stabilizes PriA on DNA. Stimulates the DNA unwinding activity of PriA helicase.</text>
</comment>
<comment type="subunit">
    <text evidence="1">Homodimer. Interacts with PriA and DnaT. Component of the replication restart primosome. Primosome assembly occurs via a 'hand-off' mechanism. PriA binds to replication forks, subsequently PriB then DnaT bind; DnaT then displaces ssDNA to generate the helicase loading substrate.</text>
</comment>
<comment type="similarity">
    <text evidence="1">Belongs to the PriB family.</text>
</comment>
<feature type="chain" id="PRO_0000199052" description="Replication restart protein PriB">
    <location>
        <begin position="1"/>
        <end position="124"/>
    </location>
</feature>
<feature type="domain" description="SSB" evidence="1">
    <location>
        <begin position="12"/>
        <end position="112"/>
    </location>
</feature>
<dbReference type="EMBL" id="AE017143">
    <property type="protein sequence ID" value="AAP95920.1"/>
    <property type="molecule type" value="Genomic_DNA"/>
</dbReference>
<dbReference type="RefSeq" id="WP_010944970.1">
    <property type="nucleotide sequence ID" value="NC_002940.2"/>
</dbReference>
<dbReference type="SMR" id="Q7VMD6"/>
<dbReference type="STRING" id="233412.HD_1046"/>
<dbReference type="KEGG" id="hdu:HD_1046"/>
<dbReference type="eggNOG" id="COG2965">
    <property type="taxonomic scope" value="Bacteria"/>
</dbReference>
<dbReference type="HOGENOM" id="CLU_166075_0_0_6"/>
<dbReference type="Proteomes" id="UP000001022">
    <property type="component" value="Chromosome"/>
</dbReference>
<dbReference type="GO" id="GO:1990077">
    <property type="term" value="C:primosome complex"/>
    <property type="evidence" value="ECO:0007669"/>
    <property type="project" value="UniProtKB-KW"/>
</dbReference>
<dbReference type="GO" id="GO:0003697">
    <property type="term" value="F:single-stranded DNA binding"/>
    <property type="evidence" value="ECO:0007669"/>
    <property type="project" value="UniProtKB-UniRule"/>
</dbReference>
<dbReference type="GO" id="GO:0006269">
    <property type="term" value="P:DNA replication, synthesis of primer"/>
    <property type="evidence" value="ECO:0007669"/>
    <property type="project" value="UniProtKB-KW"/>
</dbReference>
<dbReference type="Gene3D" id="2.40.50.140">
    <property type="entry name" value="Nucleic acid-binding proteins"/>
    <property type="match status" value="1"/>
</dbReference>
<dbReference type="HAMAP" id="MF_00720">
    <property type="entry name" value="PriB"/>
    <property type="match status" value="1"/>
</dbReference>
<dbReference type="InterPro" id="IPR012340">
    <property type="entry name" value="NA-bd_OB-fold"/>
</dbReference>
<dbReference type="InterPro" id="IPR000424">
    <property type="entry name" value="Primosome_PriB/ssb"/>
</dbReference>
<dbReference type="InterPro" id="IPR023646">
    <property type="entry name" value="Prisomal_replication_PriB"/>
</dbReference>
<dbReference type="NCBIfam" id="TIGR04418">
    <property type="entry name" value="PriB_gamma"/>
    <property type="match status" value="1"/>
</dbReference>
<dbReference type="Pfam" id="PF22657">
    <property type="entry name" value="SSB_1"/>
    <property type="match status" value="1"/>
</dbReference>
<dbReference type="PIRSF" id="PIRSF003135">
    <property type="entry name" value="Primosomal_n"/>
    <property type="match status" value="1"/>
</dbReference>
<dbReference type="SUPFAM" id="SSF50249">
    <property type="entry name" value="Nucleic acid-binding proteins"/>
    <property type="match status" value="1"/>
</dbReference>
<dbReference type="PROSITE" id="PS50935">
    <property type="entry name" value="SSB"/>
    <property type="match status" value="1"/>
</dbReference>
<proteinExistence type="inferred from homology"/>
<keyword id="KW-0235">DNA replication</keyword>
<keyword id="KW-0238">DNA-binding</keyword>
<keyword id="KW-0639">Primosome</keyword>
<keyword id="KW-1185">Reference proteome</keyword>